<keyword id="KW-0488">Methylation</keyword>
<keyword id="KW-1185">Reference proteome</keyword>
<keyword id="KW-0687">Ribonucleoprotein</keyword>
<keyword id="KW-0689">Ribosomal protein</keyword>
<keyword id="KW-0694">RNA-binding</keyword>
<keyword id="KW-0699">rRNA-binding</keyword>
<organism>
    <name type="scientific">Caulobacter vibrioides (strain NA1000 / CB15N)</name>
    <name type="common">Caulobacter crescentus</name>
    <dbReference type="NCBI Taxonomy" id="565050"/>
    <lineage>
        <taxon>Bacteria</taxon>
        <taxon>Pseudomonadati</taxon>
        <taxon>Pseudomonadota</taxon>
        <taxon>Alphaproteobacteria</taxon>
        <taxon>Caulobacterales</taxon>
        <taxon>Caulobacteraceae</taxon>
        <taxon>Caulobacter</taxon>
    </lineage>
</organism>
<proteinExistence type="inferred from homology"/>
<feature type="chain" id="PRO_1000195591" description="Large ribosomal subunit protein uL11">
    <location>
        <begin position="1"/>
        <end position="143"/>
    </location>
</feature>
<reference key="1">
    <citation type="journal article" date="2010" name="J. Bacteriol.">
        <title>The genetic basis of laboratory adaptation in Caulobacter crescentus.</title>
        <authorList>
            <person name="Marks M.E."/>
            <person name="Castro-Rojas C.M."/>
            <person name="Teiling C."/>
            <person name="Du L."/>
            <person name="Kapatral V."/>
            <person name="Walunas T.L."/>
            <person name="Crosson S."/>
        </authorList>
    </citation>
    <scope>NUCLEOTIDE SEQUENCE [LARGE SCALE GENOMIC DNA]</scope>
    <source>
        <strain>NA1000 / CB15N</strain>
    </source>
</reference>
<gene>
    <name evidence="1" type="primary">rplK</name>
    <name type="ordered locus">CCNA_00678</name>
</gene>
<sequence length="143" mass="15387">MAKKILGYIKLQVKAGSATPSPPIGPALGQRGVNIMGFCKEFNARTENVEKGTPLPTVITVYQDKSFTFITKTPPATHYLKQITGLKSGAKLTGRETVGEVTRTQLREIAEKKMKDLNANDLEAAAKIIEGSAKAMGLKIVEA</sequence>
<evidence type="ECO:0000255" key="1">
    <source>
        <dbReference type="HAMAP-Rule" id="MF_00736"/>
    </source>
</evidence>
<evidence type="ECO:0000305" key="2"/>
<accession>B8H0P4</accession>
<dbReference type="EMBL" id="CP001340">
    <property type="protein sequence ID" value="ACL94143.1"/>
    <property type="molecule type" value="Genomic_DNA"/>
</dbReference>
<dbReference type="RefSeq" id="WP_010918527.1">
    <property type="nucleotide sequence ID" value="NC_011916.1"/>
</dbReference>
<dbReference type="RefSeq" id="YP_002516051.1">
    <property type="nucleotide sequence ID" value="NC_011916.1"/>
</dbReference>
<dbReference type="SMR" id="B8H0P4"/>
<dbReference type="GeneID" id="7330485"/>
<dbReference type="KEGG" id="ccs:CCNA_00678"/>
<dbReference type="PATRIC" id="fig|565050.3.peg.669"/>
<dbReference type="HOGENOM" id="CLU_074237_2_0_5"/>
<dbReference type="OrthoDB" id="9802408at2"/>
<dbReference type="PhylomeDB" id="B8H0P4"/>
<dbReference type="Proteomes" id="UP000001364">
    <property type="component" value="Chromosome"/>
</dbReference>
<dbReference type="GO" id="GO:0022625">
    <property type="term" value="C:cytosolic large ribosomal subunit"/>
    <property type="evidence" value="ECO:0007669"/>
    <property type="project" value="TreeGrafter"/>
</dbReference>
<dbReference type="GO" id="GO:0070180">
    <property type="term" value="F:large ribosomal subunit rRNA binding"/>
    <property type="evidence" value="ECO:0007669"/>
    <property type="project" value="UniProtKB-UniRule"/>
</dbReference>
<dbReference type="GO" id="GO:0003735">
    <property type="term" value="F:structural constituent of ribosome"/>
    <property type="evidence" value="ECO:0007669"/>
    <property type="project" value="InterPro"/>
</dbReference>
<dbReference type="GO" id="GO:0006412">
    <property type="term" value="P:translation"/>
    <property type="evidence" value="ECO:0007669"/>
    <property type="project" value="UniProtKB-UniRule"/>
</dbReference>
<dbReference type="CDD" id="cd00349">
    <property type="entry name" value="Ribosomal_L11"/>
    <property type="match status" value="1"/>
</dbReference>
<dbReference type="FunFam" id="3.30.1550.10:FF:000001">
    <property type="entry name" value="50S ribosomal protein L11"/>
    <property type="match status" value="1"/>
</dbReference>
<dbReference type="Gene3D" id="1.10.10.250">
    <property type="entry name" value="Ribosomal protein L11, C-terminal domain"/>
    <property type="match status" value="1"/>
</dbReference>
<dbReference type="Gene3D" id="3.30.1550.10">
    <property type="entry name" value="Ribosomal protein L11/L12, N-terminal domain"/>
    <property type="match status" value="1"/>
</dbReference>
<dbReference type="HAMAP" id="MF_00736">
    <property type="entry name" value="Ribosomal_uL11"/>
    <property type="match status" value="1"/>
</dbReference>
<dbReference type="InterPro" id="IPR000911">
    <property type="entry name" value="Ribosomal_uL11"/>
</dbReference>
<dbReference type="InterPro" id="IPR006519">
    <property type="entry name" value="Ribosomal_uL11_bac-typ"/>
</dbReference>
<dbReference type="InterPro" id="IPR020783">
    <property type="entry name" value="Ribosomal_uL11_C"/>
</dbReference>
<dbReference type="InterPro" id="IPR036769">
    <property type="entry name" value="Ribosomal_uL11_C_sf"/>
</dbReference>
<dbReference type="InterPro" id="IPR020784">
    <property type="entry name" value="Ribosomal_uL11_N"/>
</dbReference>
<dbReference type="InterPro" id="IPR036796">
    <property type="entry name" value="Ribosomal_uL11_N_sf"/>
</dbReference>
<dbReference type="NCBIfam" id="TIGR01632">
    <property type="entry name" value="L11_bact"/>
    <property type="match status" value="1"/>
</dbReference>
<dbReference type="PANTHER" id="PTHR11661">
    <property type="entry name" value="60S RIBOSOMAL PROTEIN L12"/>
    <property type="match status" value="1"/>
</dbReference>
<dbReference type="PANTHER" id="PTHR11661:SF1">
    <property type="entry name" value="LARGE RIBOSOMAL SUBUNIT PROTEIN UL11M"/>
    <property type="match status" value="1"/>
</dbReference>
<dbReference type="Pfam" id="PF00298">
    <property type="entry name" value="Ribosomal_L11"/>
    <property type="match status" value="1"/>
</dbReference>
<dbReference type="Pfam" id="PF03946">
    <property type="entry name" value="Ribosomal_L11_N"/>
    <property type="match status" value="1"/>
</dbReference>
<dbReference type="SMART" id="SM00649">
    <property type="entry name" value="RL11"/>
    <property type="match status" value="1"/>
</dbReference>
<dbReference type="SUPFAM" id="SSF54747">
    <property type="entry name" value="Ribosomal L11/L12e N-terminal domain"/>
    <property type="match status" value="1"/>
</dbReference>
<dbReference type="SUPFAM" id="SSF46906">
    <property type="entry name" value="Ribosomal protein L11, C-terminal domain"/>
    <property type="match status" value="1"/>
</dbReference>
<comment type="function">
    <text evidence="1">Forms part of the ribosomal stalk which helps the ribosome interact with GTP-bound translation factors.</text>
</comment>
<comment type="subunit">
    <text evidence="1">Part of the ribosomal stalk of the 50S ribosomal subunit. Interacts with L10 and the large rRNA to form the base of the stalk. L10 forms an elongated spine to which L12 dimers bind in a sequential fashion forming a multimeric L10(L12)X complex.</text>
</comment>
<comment type="PTM">
    <text evidence="1">One or more lysine residues are methylated.</text>
</comment>
<comment type="similarity">
    <text evidence="1">Belongs to the universal ribosomal protein uL11 family.</text>
</comment>
<name>RL11_CAUVN</name>
<protein>
    <recommendedName>
        <fullName evidence="1">Large ribosomal subunit protein uL11</fullName>
    </recommendedName>
    <alternativeName>
        <fullName evidence="2">50S ribosomal protein L11</fullName>
    </alternativeName>
</protein>